<evidence type="ECO:0000255" key="1">
    <source>
        <dbReference type="HAMAP-Rule" id="MF_01615"/>
    </source>
</evidence>
<sequence length="196" mass="21756">MVKIGVLALQGAVREHVRCLEAPGVEVSIVKKVEQLEDLDGLVFPGGESTTMRRLIDKYGFFEPLKAFAAQGKPVFGTCAGLILMATRIDGEDHGHLELMDMTVQRNAFGRQRESFETDLIVEGVGDDVRAVFIRAPLIQEVGQNVDVLSKFGDEIVVARQGHLLGCSFHPELTDDRRFHQYFVQMVKEAKTIAQS</sequence>
<organism>
    <name type="scientific">Halalkalibacterium halodurans (strain ATCC BAA-125 / DSM 18197 / FERM 7344 / JCM 9153 / C-125)</name>
    <name type="common">Bacillus halodurans</name>
    <dbReference type="NCBI Taxonomy" id="272558"/>
    <lineage>
        <taxon>Bacteria</taxon>
        <taxon>Bacillati</taxon>
        <taxon>Bacillota</taxon>
        <taxon>Bacilli</taxon>
        <taxon>Bacillales</taxon>
        <taxon>Bacillaceae</taxon>
        <taxon>Halalkalibacterium (ex Joshi et al. 2022)</taxon>
    </lineage>
</organism>
<protein>
    <recommendedName>
        <fullName evidence="1">Pyridoxal 5'-phosphate synthase subunit PdxT</fullName>
        <ecNumber evidence="1">4.3.3.6</ecNumber>
    </recommendedName>
    <alternativeName>
        <fullName evidence="1">Pdx2</fullName>
    </alternativeName>
    <alternativeName>
        <fullName evidence="1">Pyridoxal 5'-phosphate synthase glutaminase subunit</fullName>
        <ecNumber evidence="1">3.5.1.2</ecNumber>
    </alternativeName>
</protein>
<dbReference type="EC" id="4.3.3.6" evidence="1"/>
<dbReference type="EC" id="3.5.1.2" evidence="1"/>
<dbReference type="EMBL" id="BA000004">
    <property type="protein sequence ID" value="BAB03742.1"/>
    <property type="molecule type" value="Genomic_DNA"/>
</dbReference>
<dbReference type="PIR" id="G83652">
    <property type="entry name" value="G83652"/>
</dbReference>
<dbReference type="RefSeq" id="WP_010896207.1">
    <property type="nucleotide sequence ID" value="NC_002570.2"/>
</dbReference>
<dbReference type="SMR" id="Q9KGN5"/>
<dbReference type="STRING" id="272558.gene:10725841"/>
<dbReference type="MEROPS" id="C26.A32"/>
<dbReference type="KEGG" id="bha:BH0023"/>
<dbReference type="eggNOG" id="COG0311">
    <property type="taxonomic scope" value="Bacteria"/>
</dbReference>
<dbReference type="HOGENOM" id="CLU_069674_2_0_9"/>
<dbReference type="OrthoDB" id="9810320at2"/>
<dbReference type="UniPathway" id="UPA00245"/>
<dbReference type="Proteomes" id="UP000001258">
    <property type="component" value="Chromosome"/>
</dbReference>
<dbReference type="GO" id="GO:0005829">
    <property type="term" value="C:cytosol"/>
    <property type="evidence" value="ECO:0007669"/>
    <property type="project" value="TreeGrafter"/>
</dbReference>
<dbReference type="GO" id="GO:1903600">
    <property type="term" value="C:glutaminase complex"/>
    <property type="evidence" value="ECO:0007669"/>
    <property type="project" value="TreeGrafter"/>
</dbReference>
<dbReference type="GO" id="GO:0004359">
    <property type="term" value="F:glutaminase activity"/>
    <property type="evidence" value="ECO:0007669"/>
    <property type="project" value="UniProtKB-UniRule"/>
</dbReference>
<dbReference type="GO" id="GO:0036381">
    <property type="term" value="F:pyridoxal 5'-phosphate synthase (glutamine hydrolysing) activity"/>
    <property type="evidence" value="ECO:0007669"/>
    <property type="project" value="UniProtKB-UniRule"/>
</dbReference>
<dbReference type="GO" id="GO:0006543">
    <property type="term" value="P:glutamine catabolic process"/>
    <property type="evidence" value="ECO:0007669"/>
    <property type="project" value="UniProtKB-UniRule"/>
</dbReference>
<dbReference type="GO" id="GO:0042823">
    <property type="term" value="P:pyridoxal phosphate biosynthetic process"/>
    <property type="evidence" value="ECO:0007669"/>
    <property type="project" value="UniProtKB-UniRule"/>
</dbReference>
<dbReference type="GO" id="GO:0008614">
    <property type="term" value="P:pyridoxine metabolic process"/>
    <property type="evidence" value="ECO:0007669"/>
    <property type="project" value="TreeGrafter"/>
</dbReference>
<dbReference type="CDD" id="cd01749">
    <property type="entry name" value="GATase1_PB"/>
    <property type="match status" value="1"/>
</dbReference>
<dbReference type="FunFam" id="3.40.50.880:FF:000010">
    <property type="entry name" value="uncharacterized protein LOC100176842 isoform X2"/>
    <property type="match status" value="1"/>
</dbReference>
<dbReference type="Gene3D" id="3.40.50.880">
    <property type="match status" value="1"/>
</dbReference>
<dbReference type="HAMAP" id="MF_01615">
    <property type="entry name" value="PdxT"/>
    <property type="match status" value="1"/>
</dbReference>
<dbReference type="InterPro" id="IPR029062">
    <property type="entry name" value="Class_I_gatase-like"/>
</dbReference>
<dbReference type="InterPro" id="IPR002161">
    <property type="entry name" value="PdxT/SNO"/>
</dbReference>
<dbReference type="InterPro" id="IPR021196">
    <property type="entry name" value="PdxT/SNO_CS"/>
</dbReference>
<dbReference type="NCBIfam" id="TIGR03800">
    <property type="entry name" value="PLP_synth_Pdx2"/>
    <property type="match status" value="1"/>
</dbReference>
<dbReference type="PANTHER" id="PTHR31559">
    <property type="entry name" value="PYRIDOXAL 5'-PHOSPHATE SYNTHASE SUBUNIT SNO"/>
    <property type="match status" value="1"/>
</dbReference>
<dbReference type="PANTHER" id="PTHR31559:SF0">
    <property type="entry name" value="PYRIDOXAL 5'-PHOSPHATE SYNTHASE SUBUNIT SNO1-RELATED"/>
    <property type="match status" value="1"/>
</dbReference>
<dbReference type="Pfam" id="PF01174">
    <property type="entry name" value="SNO"/>
    <property type="match status" value="1"/>
</dbReference>
<dbReference type="PIRSF" id="PIRSF005639">
    <property type="entry name" value="Glut_amidoT_SNO"/>
    <property type="match status" value="1"/>
</dbReference>
<dbReference type="SUPFAM" id="SSF52317">
    <property type="entry name" value="Class I glutamine amidotransferase-like"/>
    <property type="match status" value="1"/>
</dbReference>
<dbReference type="PROSITE" id="PS01236">
    <property type="entry name" value="PDXT_SNO_1"/>
    <property type="match status" value="1"/>
</dbReference>
<dbReference type="PROSITE" id="PS51130">
    <property type="entry name" value="PDXT_SNO_2"/>
    <property type="match status" value="1"/>
</dbReference>
<name>PDXT_HALH5</name>
<proteinExistence type="inferred from homology"/>
<accession>Q9KGN5</accession>
<keyword id="KW-0315">Glutamine amidotransferase</keyword>
<keyword id="KW-0378">Hydrolase</keyword>
<keyword id="KW-0456">Lyase</keyword>
<keyword id="KW-0663">Pyridoxal phosphate</keyword>
<keyword id="KW-1185">Reference proteome</keyword>
<comment type="function">
    <text evidence="1">Catalyzes the hydrolysis of glutamine to glutamate and ammonia as part of the biosynthesis of pyridoxal 5'-phosphate. The resulting ammonia molecule is channeled to the active site of PdxS.</text>
</comment>
<comment type="catalytic activity">
    <reaction evidence="1">
        <text>aldehydo-D-ribose 5-phosphate + D-glyceraldehyde 3-phosphate + L-glutamine = pyridoxal 5'-phosphate + L-glutamate + phosphate + 3 H2O + H(+)</text>
        <dbReference type="Rhea" id="RHEA:31507"/>
        <dbReference type="ChEBI" id="CHEBI:15377"/>
        <dbReference type="ChEBI" id="CHEBI:15378"/>
        <dbReference type="ChEBI" id="CHEBI:29985"/>
        <dbReference type="ChEBI" id="CHEBI:43474"/>
        <dbReference type="ChEBI" id="CHEBI:58273"/>
        <dbReference type="ChEBI" id="CHEBI:58359"/>
        <dbReference type="ChEBI" id="CHEBI:59776"/>
        <dbReference type="ChEBI" id="CHEBI:597326"/>
        <dbReference type="EC" id="4.3.3.6"/>
    </reaction>
</comment>
<comment type="catalytic activity">
    <reaction evidence="1">
        <text>L-glutamine + H2O = L-glutamate + NH4(+)</text>
        <dbReference type="Rhea" id="RHEA:15889"/>
        <dbReference type="ChEBI" id="CHEBI:15377"/>
        <dbReference type="ChEBI" id="CHEBI:28938"/>
        <dbReference type="ChEBI" id="CHEBI:29985"/>
        <dbReference type="ChEBI" id="CHEBI:58359"/>
        <dbReference type="EC" id="3.5.1.2"/>
    </reaction>
</comment>
<comment type="pathway">
    <text evidence="1">Cofactor biosynthesis; pyridoxal 5'-phosphate biosynthesis.</text>
</comment>
<comment type="subunit">
    <text evidence="1">In the presence of PdxS, forms a dodecamer of heterodimers. Only shows activity in the heterodimer.</text>
</comment>
<comment type="similarity">
    <text evidence="1">Belongs to the glutaminase PdxT/SNO family.</text>
</comment>
<gene>
    <name evidence="1" type="primary">pdxT</name>
    <name type="ordered locus">BH0023</name>
</gene>
<reference key="1">
    <citation type="journal article" date="2000" name="Nucleic Acids Res.">
        <title>Complete genome sequence of the alkaliphilic bacterium Bacillus halodurans and genomic sequence comparison with Bacillus subtilis.</title>
        <authorList>
            <person name="Takami H."/>
            <person name="Nakasone K."/>
            <person name="Takaki Y."/>
            <person name="Maeno G."/>
            <person name="Sasaki R."/>
            <person name="Masui N."/>
            <person name="Fuji F."/>
            <person name="Hirama C."/>
            <person name="Nakamura Y."/>
            <person name="Ogasawara N."/>
            <person name="Kuhara S."/>
            <person name="Horikoshi K."/>
        </authorList>
    </citation>
    <scope>NUCLEOTIDE SEQUENCE [LARGE SCALE GENOMIC DNA]</scope>
    <source>
        <strain>ATCC BAA-125 / DSM 18197 / FERM 7344 / JCM 9153 / C-125</strain>
    </source>
</reference>
<feature type="chain" id="PRO_0000135627" description="Pyridoxal 5'-phosphate synthase subunit PdxT">
    <location>
        <begin position="1"/>
        <end position="196"/>
    </location>
</feature>
<feature type="active site" description="Nucleophile" evidence="1">
    <location>
        <position position="79"/>
    </location>
</feature>
<feature type="active site" description="Charge relay system" evidence="1">
    <location>
        <position position="170"/>
    </location>
</feature>
<feature type="active site" description="Charge relay system" evidence="1">
    <location>
        <position position="172"/>
    </location>
</feature>
<feature type="binding site" evidence="1">
    <location>
        <begin position="47"/>
        <end position="49"/>
    </location>
    <ligand>
        <name>L-glutamine</name>
        <dbReference type="ChEBI" id="CHEBI:58359"/>
    </ligand>
</feature>
<feature type="binding site" evidence="1">
    <location>
        <position position="106"/>
    </location>
    <ligand>
        <name>L-glutamine</name>
        <dbReference type="ChEBI" id="CHEBI:58359"/>
    </ligand>
</feature>
<feature type="binding site" evidence="1">
    <location>
        <begin position="134"/>
        <end position="135"/>
    </location>
    <ligand>
        <name>L-glutamine</name>
        <dbReference type="ChEBI" id="CHEBI:58359"/>
    </ligand>
</feature>